<name>RECX_MYCBT</name>
<dbReference type="EMBL" id="AP010918">
    <property type="protein sequence ID" value="BAH27024.1"/>
    <property type="molecule type" value="Genomic_DNA"/>
</dbReference>
<dbReference type="RefSeq" id="WP_003900562.1">
    <property type="nucleotide sequence ID" value="NZ_CP014566.1"/>
</dbReference>
<dbReference type="SMR" id="C1AFJ5"/>
<dbReference type="KEGG" id="mbt:JTY_2743"/>
<dbReference type="HOGENOM" id="CLU_066607_0_2_11"/>
<dbReference type="GO" id="GO:0005737">
    <property type="term" value="C:cytoplasm"/>
    <property type="evidence" value="ECO:0007669"/>
    <property type="project" value="UniProtKB-SubCell"/>
</dbReference>
<dbReference type="GO" id="GO:0006282">
    <property type="term" value="P:regulation of DNA repair"/>
    <property type="evidence" value="ECO:0007669"/>
    <property type="project" value="UniProtKB-UniRule"/>
</dbReference>
<dbReference type="FunFam" id="1.10.10.10:FF:000656">
    <property type="entry name" value="Regulatory protein RecX"/>
    <property type="match status" value="1"/>
</dbReference>
<dbReference type="Gene3D" id="1.10.10.10">
    <property type="entry name" value="Winged helix-like DNA-binding domain superfamily/Winged helix DNA-binding domain"/>
    <property type="match status" value="2"/>
</dbReference>
<dbReference type="HAMAP" id="MF_01114">
    <property type="entry name" value="RecX"/>
    <property type="match status" value="1"/>
</dbReference>
<dbReference type="InterPro" id="IPR053926">
    <property type="entry name" value="RecX_HTH_1st"/>
</dbReference>
<dbReference type="InterPro" id="IPR053924">
    <property type="entry name" value="RecX_HTH_2nd"/>
</dbReference>
<dbReference type="InterPro" id="IPR003783">
    <property type="entry name" value="Regulatory_RecX"/>
</dbReference>
<dbReference type="InterPro" id="IPR036388">
    <property type="entry name" value="WH-like_DNA-bd_sf"/>
</dbReference>
<dbReference type="NCBIfam" id="NF001056">
    <property type="entry name" value="PRK00117.3-1"/>
    <property type="match status" value="1"/>
</dbReference>
<dbReference type="PANTHER" id="PTHR33602">
    <property type="entry name" value="REGULATORY PROTEIN RECX FAMILY PROTEIN"/>
    <property type="match status" value="1"/>
</dbReference>
<dbReference type="PANTHER" id="PTHR33602:SF1">
    <property type="entry name" value="REGULATORY PROTEIN RECX FAMILY PROTEIN"/>
    <property type="match status" value="1"/>
</dbReference>
<dbReference type="Pfam" id="PF21982">
    <property type="entry name" value="RecX_HTH1"/>
    <property type="match status" value="1"/>
</dbReference>
<dbReference type="Pfam" id="PF02631">
    <property type="entry name" value="RecX_HTH2"/>
    <property type="match status" value="1"/>
</dbReference>
<reference key="1">
    <citation type="journal article" date="2009" name="Vaccine">
        <title>Whole genome sequence analysis of Mycobacterium bovis bacillus Calmette-Guerin (BCG) Tokyo 172: a comparative study of BCG vaccine substrains.</title>
        <authorList>
            <person name="Seki M."/>
            <person name="Honda I."/>
            <person name="Fujita I."/>
            <person name="Yano I."/>
            <person name="Yamamoto S."/>
            <person name="Koyama A."/>
        </authorList>
    </citation>
    <scope>NUCLEOTIDE SEQUENCE [LARGE SCALE GENOMIC DNA]</scope>
    <source>
        <strain>BCG / Tokyo 172 / ATCC 35737 / TMC 1019</strain>
    </source>
</reference>
<organism>
    <name type="scientific">Mycobacterium bovis (strain BCG / Tokyo 172 / ATCC 35737 / TMC 1019)</name>
    <dbReference type="NCBI Taxonomy" id="561275"/>
    <lineage>
        <taxon>Bacteria</taxon>
        <taxon>Bacillati</taxon>
        <taxon>Actinomycetota</taxon>
        <taxon>Actinomycetes</taxon>
        <taxon>Mycobacteriales</taxon>
        <taxon>Mycobacteriaceae</taxon>
        <taxon>Mycobacterium</taxon>
        <taxon>Mycobacterium tuberculosis complex</taxon>
    </lineage>
</organism>
<gene>
    <name evidence="1" type="primary">recX</name>
    <name type="ordered locus">JTY_2743</name>
</gene>
<proteinExistence type="inferred from homology"/>
<evidence type="ECO:0000255" key="1">
    <source>
        <dbReference type="HAMAP-Rule" id="MF_01114"/>
    </source>
</evidence>
<keyword id="KW-0963">Cytoplasm</keyword>
<comment type="function">
    <text evidence="1">Modulates RecA activity.</text>
</comment>
<comment type="subcellular location">
    <subcellularLocation>
        <location evidence="1">Cytoplasm</location>
    </subcellularLocation>
</comment>
<comment type="similarity">
    <text evidence="1">Belongs to the RecX family.</text>
</comment>
<accession>C1AFJ5</accession>
<feature type="chain" id="PRO_1000164021" description="Regulatory protein RecX">
    <location>
        <begin position="1"/>
        <end position="174"/>
    </location>
</feature>
<protein>
    <recommendedName>
        <fullName evidence="1">Regulatory protein RecX</fullName>
    </recommendedName>
</protein>
<sequence>MTVSCPPPSTSEREEQARALCLRLLTARSRTRAELAGQLAKRGYPEDIGNRVLDRLAAVGLVDDTDFAEQWVQSRRANAAKSKRALAAELHAKGVDDDVITTVLGGIDAGAERGRAEKLVRARLRREVLIDDGTDEARVSRRLVAMLARRGYGQTLACEVVIAELAAERERRRV</sequence>